<comment type="function">
    <text evidence="3">Transcription factor that regulates the expression of the gene cluster that mediates the biosynthesis of the trans-fused decalin-containing tetramic acid phomasetin.</text>
</comment>
<comment type="subcellular location">
    <subcellularLocation>
        <location evidence="1">Nucleus</location>
    </subcellularLocation>
</comment>
<sequence length="461" mass="50653">MASEQNSPDALLSIRSSCNRCRNHKLKCVVTEAPNGTACCQRCIRAMVPCKFGRRERKKRGSSPRVVPQSPWMHSPWETTSTSMQSIYPNTEAMDVGRADALVVHGTNAFPPPANVPAEQSLTGDHSAILTPGSMNMGIFNHLSLDANNLEADDIHAYKFPHGQLHEAHHTQYWHFQADEWRMDHPNDDSHSDYSATSSSKAATAALLQLAADLQERLDALENEPSWRRKNASMDKYPIGSVLQLSSKLQQLGRCLQTDDSSSTQSESSRSRASVGATSSVHRLQMPVLESGTSDACLNVSHLTSTTRFDTSVSLMLLSCFVTLLQISTGVLGHFQDYLHAHPKTRARTLSMSAAQSSIVSLGDLDPQQQTHDRIHTAIYVLLNSLEEVEEALCLPPRVRLAITLQASPRSDGSTSEQEKAMSAAFYGGLSAATEGIDDILTEFGRRVNDTKGMLRQHMDL</sequence>
<evidence type="ECO:0000255" key="1">
    <source>
        <dbReference type="PROSITE-ProRule" id="PRU00227"/>
    </source>
</evidence>
<evidence type="ECO:0000256" key="2">
    <source>
        <dbReference type="SAM" id="MobiDB-lite"/>
    </source>
</evidence>
<evidence type="ECO:0000269" key="3">
    <source>
    </source>
</evidence>
<evidence type="ECO:0000303" key="4">
    <source>
    </source>
</evidence>
<accession>A0A2Z5XAK7</accession>
<gene>
    <name evidence="4" type="primary">phm6</name>
</gene>
<organism>
    <name type="scientific">Pyrenochaetopsis sp</name>
    <dbReference type="NCBI Taxonomy" id="1756125"/>
    <lineage>
        <taxon>Eukaryota</taxon>
        <taxon>Fungi</taxon>
        <taxon>Dikarya</taxon>
        <taxon>Ascomycota</taxon>
        <taxon>Pezizomycotina</taxon>
        <taxon>Dothideomycetes</taxon>
        <taxon>Pleosporomycetidae</taxon>
        <taxon>Pleosporales</taxon>
        <taxon>Pleosporineae</taxon>
        <taxon>Pyrenochaetopsidaceae</taxon>
        <taxon>Pyrenochaetopsis</taxon>
    </lineage>
</organism>
<proteinExistence type="inferred from homology"/>
<protein>
    <recommendedName>
        <fullName evidence="4">Transcription factor phm6</fullName>
    </recommendedName>
    <alternativeName>
        <fullName evidence="4">Phomasetin biosynthesis cluster protein 6</fullName>
    </alternativeName>
</protein>
<reference key="1">
    <citation type="journal article" date="2018" name="Angew. Chem. Int. Ed.">
        <title>Control of the stereochemical course of [4+2] cycloaddition during trans-decalin formation by Fsa2-family enzymes.</title>
        <authorList>
            <person name="Kato N."/>
            <person name="Nogawa T."/>
            <person name="Takita R."/>
            <person name="Kinugasa K."/>
            <person name="Kanai M."/>
            <person name="Uchiyama M."/>
            <person name="Osada H."/>
            <person name="Takahashi S."/>
        </authorList>
    </citation>
    <scope>NUCLEOTIDE SEQUENCE [GENOMIC DNA]</scope>
    <scope>FUNCTION</scope>
    <source>
        <strain>RK10-F058</strain>
    </source>
</reference>
<feature type="chain" id="PRO_0000453354" description="Transcription factor phm6">
    <location>
        <begin position="1"/>
        <end position="461"/>
    </location>
</feature>
<feature type="DNA-binding region" description="Zn(2)-C6 fungal-type" evidence="1">
    <location>
        <begin position="18"/>
        <end position="50"/>
    </location>
</feature>
<feature type="region of interest" description="Disordered" evidence="2">
    <location>
        <begin position="55"/>
        <end position="79"/>
    </location>
</feature>
<feature type="region of interest" description="Disordered" evidence="2">
    <location>
        <begin position="256"/>
        <end position="278"/>
    </location>
</feature>
<feature type="compositionally biased region" description="Low complexity" evidence="2">
    <location>
        <begin position="256"/>
        <end position="274"/>
    </location>
</feature>
<dbReference type="EMBL" id="LC361337">
    <property type="protein sequence ID" value="BBC43189.1"/>
    <property type="molecule type" value="Genomic_DNA"/>
</dbReference>
<dbReference type="SMR" id="A0A2Z5XAK7"/>
<dbReference type="GO" id="GO:0005634">
    <property type="term" value="C:nucleus"/>
    <property type="evidence" value="ECO:0007669"/>
    <property type="project" value="UniProtKB-SubCell"/>
</dbReference>
<dbReference type="GO" id="GO:0003677">
    <property type="term" value="F:DNA binding"/>
    <property type="evidence" value="ECO:0007669"/>
    <property type="project" value="UniProtKB-KW"/>
</dbReference>
<dbReference type="GO" id="GO:0000981">
    <property type="term" value="F:DNA-binding transcription factor activity, RNA polymerase II-specific"/>
    <property type="evidence" value="ECO:0007669"/>
    <property type="project" value="InterPro"/>
</dbReference>
<dbReference type="GO" id="GO:0008270">
    <property type="term" value="F:zinc ion binding"/>
    <property type="evidence" value="ECO:0007669"/>
    <property type="project" value="InterPro"/>
</dbReference>
<dbReference type="CDD" id="cd00067">
    <property type="entry name" value="GAL4"/>
    <property type="match status" value="1"/>
</dbReference>
<dbReference type="Gene3D" id="4.10.240.10">
    <property type="entry name" value="Zn(2)-C6 fungal-type DNA-binding domain"/>
    <property type="match status" value="1"/>
</dbReference>
<dbReference type="InterPro" id="IPR036864">
    <property type="entry name" value="Zn2-C6_fun-type_DNA-bd_sf"/>
</dbReference>
<dbReference type="InterPro" id="IPR001138">
    <property type="entry name" value="Zn2Cys6_DnaBD"/>
</dbReference>
<dbReference type="SUPFAM" id="SSF57701">
    <property type="entry name" value="Zn2/Cys6 DNA-binding domain"/>
    <property type="match status" value="1"/>
</dbReference>
<dbReference type="PROSITE" id="PS00463">
    <property type="entry name" value="ZN2_CY6_FUNGAL_1"/>
    <property type="match status" value="1"/>
</dbReference>
<dbReference type="PROSITE" id="PS50048">
    <property type="entry name" value="ZN2_CY6_FUNGAL_2"/>
    <property type="match status" value="1"/>
</dbReference>
<name>PHM6_PYRSX</name>
<keyword id="KW-0238">DNA-binding</keyword>
<keyword id="KW-0479">Metal-binding</keyword>
<keyword id="KW-0539">Nucleus</keyword>
<keyword id="KW-0804">Transcription</keyword>
<keyword id="KW-0805">Transcription regulation</keyword>
<keyword id="KW-0862">Zinc</keyword>